<organism>
    <name type="scientific">Arabidopsis thaliana</name>
    <name type="common">Mouse-ear cress</name>
    <dbReference type="NCBI Taxonomy" id="3702"/>
    <lineage>
        <taxon>Eukaryota</taxon>
        <taxon>Viridiplantae</taxon>
        <taxon>Streptophyta</taxon>
        <taxon>Embryophyta</taxon>
        <taxon>Tracheophyta</taxon>
        <taxon>Spermatophyta</taxon>
        <taxon>Magnoliopsida</taxon>
        <taxon>eudicotyledons</taxon>
        <taxon>Gunneridae</taxon>
        <taxon>Pentapetalae</taxon>
        <taxon>rosids</taxon>
        <taxon>malvids</taxon>
        <taxon>Brassicales</taxon>
        <taxon>Brassicaceae</taxon>
        <taxon>Camelineae</taxon>
        <taxon>Arabidopsis</taxon>
    </lineage>
</organism>
<comment type="function">
    <text evidence="1">Trans-acting factor that binds specifically to the consensus nucleotide sequence 5'-TNCGTACAA-3'.</text>
</comment>
<comment type="cofactor">
    <cofactor evidence="1">
        <name>Zn(2+)</name>
        <dbReference type="ChEBI" id="CHEBI:29105"/>
    </cofactor>
    <text evidence="1">Binds 2 Zn(2+) ions per subunit.</text>
</comment>
<comment type="subcellular location">
    <subcellularLocation>
        <location evidence="5">Nucleus</location>
    </subcellularLocation>
</comment>
<comment type="domain">
    <text>The SBP-type zinc finger is required for the binding to DNA.</text>
</comment>
<name>SP13B_ARATH</name>
<gene>
    <name type="primary">SPL13B</name>
    <name type="synonym">SPL13</name>
    <name type="ordered locus">At5g50670</name>
    <name type="ORF">MFB16.6</name>
</gene>
<dbReference type="EMBL" id="AB023037">
    <property type="protein sequence ID" value="BAA96980.1"/>
    <property type="molecule type" value="Genomic_DNA"/>
</dbReference>
<dbReference type="EMBL" id="CP002688">
    <property type="protein sequence ID" value="AED95977.1"/>
    <property type="molecule type" value="Genomic_DNA"/>
</dbReference>
<dbReference type="EMBL" id="CP002688">
    <property type="protein sequence ID" value="ANM70663.1"/>
    <property type="molecule type" value="Genomic_DNA"/>
</dbReference>
<dbReference type="RefSeq" id="NP_001332253.1">
    <property type="nucleotide sequence ID" value="NM_001344905.1"/>
</dbReference>
<dbReference type="RefSeq" id="NP_568731.1">
    <property type="nucleotide sequence ID" value="NM_124435.3"/>
</dbReference>
<dbReference type="RefSeq" id="NP_568740.1">
    <property type="nucleotide sequence ID" value="NM_124445.4"/>
</dbReference>
<dbReference type="RefSeq" id="NP_851161.1">
    <property type="nucleotide sequence ID" value="NM_180830.4"/>
</dbReference>
<dbReference type="SMR" id="P0DI11"/>
<dbReference type="BioGRID" id="20372">
    <property type="interactions" value="1"/>
</dbReference>
<dbReference type="BioGRID" id="20384">
    <property type="interactions" value="18"/>
</dbReference>
<dbReference type="STRING" id="3702.P0DI11"/>
<dbReference type="EnsemblPlants" id="AT5G50570.1">
    <property type="protein sequence ID" value="AT5G50570.1"/>
    <property type="gene ID" value="AT5G50570"/>
</dbReference>
<dbReference type="EnsemblPlants" id="AT5G50570.2">
    <property type="protein sequence ID" value="AT5G50570.2"/>
    <property type="gene ID" value="AT5G50570"/>
</dbReference>
<dbReference type="EnsemblPlants" id="AT5G50670.1">
    <property type="protein sequence ID" value="AT5G50670.1"/>
    <property type="gene ID" value="AT5G50670"/>
</dbReference>
<dbReference type="EnsemblPlants" id="AT5G50670.2">
    <property type="protein sequence ID" value="AT5G50670.2"/>
    <property type="gene ID" value="AT5G50670"/>
</dbReference>
<dbReference type="GeneID" id="835126"/>
<dbReference type="GeneID" id="835138"/>
<dbReference type="Gramene" id="AT5G50570.1">
    <property type="protein sequence ID" value="AT5G50570.1"/>
    <property type="gene ID" value="AT5G50570"/>
</dbReference>
<dbReference type="Gramene" id="AT5G50570.2">
    <property type="protein sequence ID" value="AT5G50570.2"/>
    <property type="gene ID" value="AT5G50570"/>
</dbReference>
<dbReference type="Gramene" id="AT5G50670.1">
    <property type="protein sequence ID" value="AT5G50670.1"/>
    <property type="gene ID" value="AT5G50670"/>
</dbReference>
<dbReference type="Gramene" id="AT5G50670.2">
    <property type="protein sequence ID" value="AT5G50670.2"/>
    <property type="gene ID" value="AT5G50670"/>
</dbReference>
<dbReference type="KEGG" id="ath:AT5G50570"/>
<dbReference type="KEGG" id="ath:AT5G50670"/>
<dbReference type="Araport" id="AT5G50670"/>
<dbReference type="TAIR" id="AT5G50670">
    <property type="gene designation" value="SPL13B"/>
</dbReference>
<dbReference type="HOGENOM" id="CLU_042475_0_0_1"/>
<dbReference type="InParanoid" id="P0DI11"/>
<dbReference type="OMA" id="SKWKETT"/>
<dbReference type="OrthoDB" id="514967at2759"/>
<dbReference type="PhylomeDB" id="P0DI11"/>
<dbReference type="PRO" id="PR:P0DI11"/>
<dbReference type="Proteomes" id="UP000006548">
    <property type="component" value="Chromosome 5"/>
</dbReference>
<dbReference type="ExpressionAtlas" id="P0DI11">
    <property type="expression patterns" value="baseline"/>
</dbReference>
<dbReference type="GO" id="GO:0005634">
    <property type="term" value="C:nucleus"/>
    <property type="evidence" value="ECO:0007669"/>
    <property type="project" value="UniProtKB-SubCell"/>
</dbReference>
<dbReference type="GO" id="GO:0000976">
    <property type="term" value="F:transcription cis-regulatory region binding"/>
    <property type="evidence" value="ECO:0000353"/>
    <property type="project" value="TAIR"/>
</dbReference>
<dbReference type="GO" id="GO:0008270">
    <property type="term" value="F:zinc ion binding"/>
    <property type="evidence" value="ECO:0007669"/>
    <property type="project" value="UniProtKB-KW"/>
</dbReference>
<dbReference type="GO" id="GO:0048653">
    <property type="term" value="P:anther development"/>
    <property type="evidence" value="ECO:0000315"/>
    <property type="project" value="TAIR"/>
</dbReference>
<dbReference type="FunFam" id="4.10.1100.10:FF:000001">
    <property type="entry name" value="Squamosa promoter-binding-like protein 14"/>
    <property type="match status" value="1"/>
</dbReference>
<dbReference type="Gene3D" id="4.10.1100.10">
    <property type="entry name" value="Transcription factor, SBP-box domain"/>
    <property type="match status" value="1"/>
</dbReference>
<dbReference type="InterPro" id="IPR044817">
    <property type="entry name" value="SBP-like"/>
</dbReference>
<dbReference type="InterPro" id="IPR004333">
    <property type="entry name" value="SBP_dom"/>
</dbReference>
<dbReference type="InterPro" id="IPR036893">
    <property type="entry name" value="SBP_sf"/>
</dbReference>
<dbReference type="PANTHER" id="PTHR31251:SF207">
    <property type="entry name" value="SQUAMOSA PROMOTER-BINDING-LIKE PROTEIN 13A-RELATED"/>
    <property type="match status" value="1"/>
</dbReference>
<dbReference type="PANTHER" id="PTHR31251">
    <property type="entry name" value="SQUAMOSA PROMOTER-BINDING-LIKE PROTEIN 4"/>
    <property type="match status" value="1"/>
</dbReference>
<dbReference type="Pfam" id="PF03110">
    <property type="entry name" value="SBP"/>
    <property type="match status" value="1"/>
</dbReference>
<dbReference type="SUPFAM" id="SSF103612">
    <property type="entry name" value="SBT domain"/>
    <property type="match status" value="1"/>
</dbReference>
<dbReference type="PROSITE" id="PS51141">
    <property type="entry name" value="ZF_SBP"/>
    <property type="match status" value="1"/>
</dbReference>
<evidence type="ECO:0000250" key="1"/>
<evidence type="ECO:0000255" key="2"/>
<evidence type="ECO:0000255" key="3">
    <source>
        <dbReference type="PROSITE-ProRule" id="PRU00470"/>
    </source>
</evidence>
<evidence type="ECO:0000256" key="4">
    <source>
        <dbReference type="SAM" id="MobiDB-lite"/>
    </source>
</evidence>
<evidence type="ECO:0000305" key="5"/>
<feature type="chain" id="PRO_0000416584" description="Squamosa promoter-binding-like protein 13B">
    <location>
        <begin position="1"/>
        <end position="359"/>
    </location>
</feature>
<feature type="zinc finger region" description="SBP-type" evidence="3">
    <location>
        <begin position="98"/>
        <end position="175"/>
    </location>
</feature>
<feature type="region of interest" description="Disordered" evidence="4">
    <location>
        <begin position="75"/>
        <end position="94"/>
    </location>
</feature>
<feature type="short sequence motif" description="Bipartite nuclear localization signal" evidence="2">
    <location>
        <begin position="158"/>
        <end position="174"/>
    </location>
</feature>
<feature type="binding site" evidence="3">
    <location>
        <position position="101"/>
    </location>
    <ligand>
        <name>Zn(2+)</name>
        <dbReference type="ChEBI" id="CHEBI:29105"/>
        <label>1</label>
    </ligand>
</feature>
<feature type="binding site" evidence="3">
    <location>
        <position position="106"/>
    </location>
    <ligand>
        <name>Zn(2+)</name>
        <dbReference type="ChEBI" id="CHEBI:29105"/>
        <label>1</label>
    </ligand>
</feature>
<feature type="binding site" evidence="3">
    <location>
        <position position="123"/>
    </location>
    <ligand>
        <name>Zn(2+)</name>
        <dbReference type="ChEBI" id="CHEBI:29105"/>
        <label>1</label>
    </ligand>
</feature>
<feature type="binding site" evidence="3">
    <location>
        <position position="126"/>
    </location>
    <ligand>
        <name>Zn(2+)</name>
        <dbReference type="ChEBI" id="CHEBI:29105"/>
        <label>1</label>
    </ligand>
</feature>
<feature type="binding site" evidence="3">
    <location>
        <position position="142"/>
    </location>
    <ligand>
        <name>Zn(2+)</name>
        <dbReference type="ChEBI" id="CHEBI:29105"/>
        <label>2</label>
    </ligand>
</feature>
<feature type="binding site" evidence="3">
    <location>
        <position position="145"/>
    </location>
    <ligand>
        <name>Zn(2+)</name>
        <dbReference type="ChEBI" id="CHEBI:29105"/>
        <label>2</label>
    </ligand>
</feature>
<feature type="binding site" evidence="3">
    <location>
        <position position="149"/>
    </location>
    <ligand>
        <name>Zn(2+)</name>
        <dbReference type="ChEBI" id="CHEBI:29105"/>
        <label>2</label>
    </ligand>
</feature>
<feature type="binding site" evidence="3">
    <location>
        <position position="161"/>
    </location>
    <ligand>
        <name>Zn(2+)</name>
        <dbReference type="ChEBI" id="CHEBI:29105"/>
        <label>2</label>
    </ligand>
</feature>
<sequence length="359" mass="39108">MDWNFKLSSGYLSGFDQEPDLSPMDGSISFGGSSQSKADFSFDLKLGRNIGNSSSVFGDTEQVISLSKWKDSALAKPEGSRSSSSKRTRGNGVGTNQMPICLVDGCDSDFSNCREYHKRHKVCDVHSKTPVVTINGHKQRFCQQCSRFHALEEFDEGKRSCRKRLDGHNRRRRKPQPEHIGRPANFFTGFQGSKLLEFSGGSHVFPTTSVLNPSWGNSLVSVAVAANGSSYGQSQSYVVGSSPAKTGIMFPISSSPNSTRSIAKQFPFLQEEESSRTASLCERMTSCIHDSDCALSLLSSSSSSVPHLLQPPLSLSQEAVETVFYGSGLFENASAVSDGSVISGNEAVRLPQTFPFHWE</sequence>
<proteinExistence type="inferred from homology"/>
<reference key="1">
    <citation type="journal article" date="2000" name="DNA Res.">
        <title>Structural analysis of Arabidopsis thaliana chromosome 5. X. Sequence features of the regions of 3,076,755 bp covered by sixty P1 and TAC clones.</title>
        <authorList>
            <person name="Sato S."/>
            <person name="Nakamura Y."/>
            <person name="Kaneko T."/>
            <person name="Katoh T."/>
            <person name="Asamizu E."/>
            <person name="Kotani H."/>
            <person name="Tabata S."/>
        </authorList>
    </citation>
    <scope>NUCLEOTIDE SEQUENCE [LARGE SCALE GENOMIC DNA]</scope>
    <source>
        <strain>cv. Columbia</strain>
    </source>
</reference>
<reference key="2">
    <citation type="journal article" date="2017" name="Plant J.">
        <title>Araport11: a complete reannotation of the Arabidopsis thaliana reference genome.</title>
        <authorList>
            <person name="Cheng C.Y."/>
            <person name="Krishnakumar V."/>
            <person name="Chan A.P."/>
            <person name="Thibaud-Nissen F."/>
            <person name="Schobel S."/>
            <person name="Town C.D."/>
        </authorList>
    </citation>
    <scope>GENOME REANNOTATION</scope>
    <source>
        <strain>cv. Columbia</strain>
    </source>
</reference>
<keyword id="KW-0238">DNA-binding</keyword>
<keyword id="KW-0479">Metal-binding</keyword>
<keyword id="KW-0539">Nucleus</keyword>
<keyword id="KW-1185">Reference proteome</keyword>
<keyword id="KW-0804">Transcription</keyword>
<keyword id="KW-0805">Transcription regulation</keyword>
<keyword id="KW-0862">Zinc</keyword>
<keyword id="KW-0863">Zinc-finger</keyword>
<accession>P0DI11</accession>
<accession>Q8LFW6</accession>
<accession>Q9LUF4</accession>
<protein>
    <recommendedName>
        <fullName>Squamosa promoter-binding-like protein 13B</fullName>
    </recommendedName>
</protein>